<feature type="chain" id="PRO_0000096388" description="Mediator of RNA polymerase II transcription subunit 6">
    <location>
        <begin position="1"/>
        <end position="246"/>
    </location>
</feature>
<feature type="region of interest" description="Disordered" evidence="1">
    <location>
        <begin position="193"/>
        <end position="246"/>
    </location>
</feature>
<feature type="compositionally biased region" description="Basic and acidic residues" evidence="1">
    <location>
        <begin position="206"/>
        <end position="226"/>
    </location>
</feature>
<feature type="modified residue" description="N6-acetyllysine" evidence="13">
    <location>
        <position position="236"/>
    </location>
</feature>
<feature type="modified residue" description="N6-acetyllysine" evidence="13">
    <location>
        <position position="241"/>
    </location>
</feature>
<feature type="cross-link" description="Glycyl lysine isopeptide (Lys-Gly) (interchain with G-Cter in SUMO2)" evidence="14">
    <location>
        <position position="208"/>
    </location>
</feature>
<feature type="splice variant" id="VSP_054589" description="In isoform 2." evidence="11">
    <original>V</original>
    <variation>VSLFSFYK</variation>
    <location>
        <position position="119"/>
    </location>
</feature>
<feature type="splice variant" id="VSP_054590" description="In isoform 3." evidence="11">
    <original>DKVRPKAKRKEEPSSIFQRQRVDALLLDLRQKFPPKFVQLKPGEKPVPVDQTKKEAEPIPETVKPEEKETTKNVQQTVSAKGPPEKRMRLQ</original>
    <variation>AKAWRKACSSGSNKERGRTYTRNCKT</variation>
    <location>
        <begin position="156"/>
        <end position="246"/>
    </location>
</feature>
<feature type="sequence conflict" description="In Ref. 1; AAC26869." evidence="12" ref="1">
    <original>D</original>
    <variation>V</variation>
    <location>
        <position position="151"/>
    </location>
</feature>
<feature type="sequence conflict" description="In Ref. 9; AAB84363." evidence="12" ref="9">
    <original>D</original>
    <variation>G</variation>
    <location>
        <position position="156"/>
    </location>
</feature>
<feature type="sequence conflict" description="In Ref. 5; BAD97066." evidence="12" ref="5">
    <original>P</original>
    <variation>S</variation>
    <location>
        <position position="203"/>
    </location>
</feature>
<feature type="sequence conflict" description="In Ref. 5; BAD96307." evidence="12" ref="5">
    <original>E</original>
    <variation>G</variation>
    <location>
        <position position="224"/>
    </location>
</feature>
<feature type="helix" evidence="15">
    <location>
        <begin position="10"/>
        <end position="12"/>
    </location>
</feature>
<feature type="helix" evidence="15">
    <location>
        <begin position="18"/>
        <end position="20"/>
    </location>
</feature>
<feature type="strand" evidence="15">
    <location>
        <begin position="21"/>
        <end position="23"/>
    </location>
</feature>
<feature type="helix" evidence="15">
    <location>
        <begin position="26"/>
        <end position="32"/>
    </location>
</feature>
<feature type="strand" evidence="15">
    <location>
        <begin position="39"/>
        <end position="41"/>
    </location>
</feature>
<feature type="strand" evidence="15">
    <location>
        <begin position="43"/>
        <end position="45"/>
    </location>
</feature>
<feature type="helix" evidence="15">
    <location>
        <begin position="46"/>
        <end position="52"/>
    </location>
</feature>
<feature type="turn" evidence="15">
    <location>
        <begin position="56"/>
        <end position="61"/>
    </location>
</feature>
<feature type="strand" evidence="15">
    <location>
        <begin position="65"/>
        <end position="73"/>
    </location>
</feature>
<feature type="strand" evidence="15">
    <location>
        <begin position="75"/>
        <end position="77"/>
    </location>
</feature>
<feature type="strand" evidence="15">
    <location>
        <begin position="79"/>
        <end position="88"/>
    </location>
</feature>
<feature type="strand" evidence="15">
    <location>
        <begin position="91"/>
        <end position="101"/>
    </location>
</feature>
<feature type="strand" evidence="15">
    <location>
        <begin position="104"/>
        <end position="107"/>
    </location>
</feature>
<feature type="helix" evidence="15">
    <location>
        <begin position="111"/>
        <end position="136"/>
    </location>
</feature>
<feature type="strand" evidence="15">
    <location>
        <begin position="137"/>
        <end position="140"/>
    </location>
</feature>
<feature type="turn" evidence="15">
    <location>
        <begin position="141"/>
        <end position="143"/>
    </location>
</feature>
<feature type="strand" evidence="15">
    <location>
        <begin position="144"/>
        <end position="147"/>
    </location>
</feature>
<feature type="helix" evidence="15">
    <location>
        <begin position="174"/>
        <end position="187"/>
    </location>
</feature>
<protein>
    <recommendedName>
        <fullName>Mediator of RNA polymerase II transcription subunit 6</fullName>
    </recommendedName>
    <alternativeName>
        <fullName>Activator-recruited cofactor 33 kDa component</fullName>
        <shortName>ARC33</shortName>
    </alternativeName>
    <alternativeName>
        <fullName>Mediator complex subunit 6</fullName>
        <shortName>hMed6</shortName>
    </alternativeName>
    <alternativeName>
        <fullName>Renal carcinoma antigen NY-REN-28</fullName>
    </alternativeName>
</protein>
<sequence length="246" mass="28425">MAAVDIRDNLLGISWVDSSWIPILNSGSVLDYFSERSNPFYDRTCNNEVVKMQRLTLEHLNQMVGIEYILLHAQEPILFIIRKQQRQSPAQVIPLADYYIIAGVIYQAPDLGSVINSRVLTAVHGIQSAFDEAMSYCRYHPSKGYWWHFKDHEEQDKVRPKAKRKEEPSSIFQRQRVDALLLDLRQKFPPKFVQLKPGEKPVPVDQTKKEAEPIPETVKPEEKETTKNVQQTVSAKGPPEKRMRLQ</sequence>
<accession>O75586</accession>
<accession>B4DU17</accession>
<accession>B4E2P0</accession>
<accession>O15401</accession>
<accession>Q53FE3</accession>
<accession>Q53HJ3</accession>
<accession>Q6FHQ4</accession>
<accession>Q9BTH1</accession>
<accession>Q9UHL1</accession>
<reference key="1">
    <citation type="journal article" date="1998" name="Mol. Cell">
        <title>NAT, a human complex containing Srb polypeptides that functions as a negative regulator of activated transcription.</title>
        <authorList>
            <person name="Sun X."/>
            <person name="Zhang Y."/>
            <person name="Cho H."/>
            <person name="Rickert P."/>
            <person name="Lees E."/>
            <person name="Lane W.S."/>
            <person name="Reinberg D."/>
        </authorList>
    </citation>
    <scope>NUCLEOTIDE SEQUENCE [MRNA] (ISOFORM 1)</scope>
    <scope>IDENTIFICATION BY MASS SPECTROMETRY</scope>
    <scope>IDENTIFICATION IN A FORM OF THE MEDIATOR COMPLEX</scope>
</reference>
<reference key="2">
    <citation type="submission" date="2003-05" db="EMBL/GenBank/DDBJ databases">
        <title>Cloning of human full-length CDSs in BD Creator(TM) system donor vector.</title>
        <authorList>
            <person name="Kalnine N."/>
            <person name="Chen X."/>
            <person name="Rolfs A."/>
            <person name="Halleck A."/>
            <person name="Hines L."/>
            <person name="Eisenstein S."/>
            <person name="Koundinya M."/>
            <person name="Raphael J."/>
            <person name="Moreira D."/>
            <person name="Kelley T."/>
            <person name="LaBaer J."/>
            <person name="Lin Y."/>
            <person name="Phelan M."/>
            <person name="Farmer A."/>
        </authorList>
    </citation>
    <scope>NUCLEOTIDE SEQUENCE [LARGE SCALE MRNA] (ISOFORM 1)</scope>
</reference>
<reference key="3">
    <citation type="submission" date="2004-06" db="EMBL/GenBank/DDBJ databases">
        <title>Cloning of human full open reading frames in Gateway(TM) system entry vector (pDONR201).</title>
        <authorList>
            <person name="Halleck A."/>
            <person name="Ebert L."/>
            <person name="Mkoundinya M."/>
            <person name="Schick M."/>
            <person name="Eisenstein S."/>
            <person name="Neubert P."/>
            <person name="Kstrang K."/>
            <person name="Schatten R."/>
            <person name="Shen B."/>
            <person name="Henze S."/>
            <person name="Mar W."/>
            <person name="Korn B."/>
            <person name="Zuo D."/>
            <person name="Hu Y."/>
            <person name="LaBaer J."/>
        </authorList>
    </citation>
    <scope>NUCLEOTIDE SEQUENCE [LARGE SCALE MRNA] (ISOFORM 1)</scope>
</reference>
<reference key="4">
    <citation type="journal article" date="2004" name="Nat. Genet.">
        <title>Complete sequencing and characterization of 21,243 full-length human cDNAs.</title>
        <authorList>
            <person name="Ota T."/>
            <person name="Suzuki Y."/>
            <person name="Nishikawa T."/>
            <person name="Otsuki T."/>
            <person name="Sugiyama T."/>
            <person name="Irie R."/>
            <person name="Wakamatsu A."/>
            <person name="Hayashi K."/>
            <person name="Sato H."/>
            <person name="Nagai K."/>
            <person name="Kimura K."/>
            <person name="Makita H."/>
            <person name="Sekine M."/>
            <person name="Obayashi M."/>
            <person name="Nishi T."/>
            <person name="Shibahara T."/>
            <person name="Tanaka T."/>
            <person name="Ishii S."/>
            <person name="Yamamoto J."/>
            <person name="Saito K."/>
            <person name="Kawai Y."/>
            <person name="Isono Y."/>
            <person name="Nakamura Y."/>
            <person name="Nagahari K."/>
            <person name="Murakami K."/>
            <person name="Yasuda T."/>
            <person name="Iwayanagi T."/>
            <person name="Wagatsuma M."/>
            <person name="Shiratori A."/>
            <person name="Sudo H."/>
            <person name="Hosoiri T."/>
            <person name="Kaku Y."/>
            <person name="Kodaira H."/>
            <person name="Kondo H."/>
            <person name="Sugawara M."/>
            <person name="Takahashi M."/>
            <person name="Kanda K."/>
            <person name="Yokoi T."/>
            <person name="Furuya T."/>
            <person name="Kikkawa E."/>
            <person name="Omura Y."/>
            <person name="Abe K."/>
            <person name="Kamihara K."/>
            <person name="Katsuta N."/>
            <person name="Sato K."/>
            <person name="Tanikawa M."/>
            <person name="Yamazaki M."/>
            <person name="Ninomiya K."/>
            <person name="Ishibashi T."/>
            <person name="Yamashita H."/>
            <person name="Murakawa K."/>
            <person name="Fujimori K."/>
            <person name="Tanai H."/>
            <person name="Kimata M."/>
            <person name="Watanabe M."/>
            <person name="Hiraoka S."/>
            <person name="Chiba Y."/>
            <person name="Ishida S."/>
            <person name="Ono Y."/>
            <person name="Takiguchi S."/>
            <person name="Watanabe S."/>
            <person name="Yosida M."/>
            <person name="Hotuta T."/>
            <person name="Kusano J."/>
            <person name="Kanehori K."/>
            <person name="Takahashi-Fujii A."/>
            <person name="Hara H."/>
            <person name="Tanase T.-O."/>
            <person name="Nomura Y."/>
            <person name="Togiya S."/>
            <person name="Komai F."/>
            <person name="Hara R."/>
            <person name="Takeuchi K."/>
            <person name="Arita M."/>
            <person name="Imose N."/>
            <person name="Musashino K."/>
            <person name="Yuuki H."/>
            <person name="Oshima A."/>
            <person name="Sasaki N."/>
            <person name="Aotsuka S."/>
            <person name="Yoshikawa Y."/>
            <person name="Matsunawa H."/>
            <person name="Ichihara T."/>
            <person name="Shiohata N."/>
            <person name="Sano S."/>
            <person name="Moriya S."/>
            <person name="Momiyama H."/>
            <person name="Satoh N."/>
            <person name="Takami S."/>
            <person name="Terashima Y."/>
            <person name="Suzuki O."/>
            <person name="Nakagawa S."/>
            <person name="Senoh A."/>
            <person name="Mizoguchi H."/>
            <person name="Goto Y."/>
            <person name="Shimizu F."/>
            <person name="Wakebe H."/>
            <person name="Hishigaki H."/>
            <person name="Watanabe T."/>
            <person name="Sugiyama A."/>
            <person name="Takemoto M."/>
            <person name="Kawakami B."/>
            <person name="Yamazaki M."/>
            <person name="Watanabe K."/>
            <person name="Kumagai A."/>
            <person name="Itakura S."/>
            <person name="Fukuzumi Y."/>
            <person name="Fujimori Y."/>
            <person name="Komiyama M."/>
            <person name="Tashiro H."/>
            <person name="Tanigami A."/>
            <person name="Fujiwara T."/>
            <person name="Ono T."/>
            <person name="Yamada K."/>
            <person name="Fujii Y."/>
            <person name="Ozaki K."/>
            <person name="Hirao M."/>
            <person name="Ohmori Y."/>
            <person name="Kawabata A."/>
            <person name="Hikiji T."/>
            <person name="Kobatake N."/>
            <person name="Inagaki H."/>
            <person name="Ikema Y."/>
            <person name="Okamoto S."/>
            <person name="Okitani R."/>
            <person name="Kawakami T."/>
            <person name="Noguchi S."/>
            <person name="Itoh T."/>
            <person name="Shigeta K."/>
            <person name="Senba T."/>
            <person name="Matsumura K."/>
            <person name="Nakajima Y."/>
            <person name="Mizuno T."/>
            <person name="Morinaga M."/>
            <person name="Sasaki M."/>
            <person name="Togashi T."/>
            <person name="Oyama M."/>
            <person name="Hata H."/>
            <person name="Watanabe M."/>
            <person name="Komatsu T."/>
            <person name="Mizushima-Sugano J."/>
            <person name="Satoh T."/>
            <person name="Shirai Y."/>
            <person name="Takahashi Y."/>
            <person name="Nakagawa K."/>
            <person name="Okumura K."/>
            <person name="Nagase T."/>
            <person name="Nomura N."/>
            <person name="Kikuchi H."/>
            <person name="Masuho Y."/>
            <person name="Yamashita R."/>
            <person name="Nakai K."/>
            <person name="Yada T."/>
            <person name="Nakamura Y."/>
            <person name="Ohara O."/>
            <person name="Isogai T."/>
            <person name="Sugano S."/>
        </authorList>
    </citation>
    <scope>NUCLEOTIDE SEQUENCE [LARGE SCALE MRNA] (ISOFORMS 2 AND 3)</scope>
    <source>
        <tissue>Placenta</tissue>
        <tissue>Trachea</tissue>
    </source>
</reference>
<reference key="5">
    <citation type="submission" date="2005-04" db="EMBL/GenBank/DDBJ databases">
        <authorList>
            <person name="Suzuki Y."/>
            <person name="Sugano S."/>
            <person name="Totoki Y."/>
            <person name="Toyoda A."/>
            <person name="Takeda T."/>
            <person name="Sakaki Y."/>
            <person name="Tanaka A."/>
            <person name="Yokoyama S."/>
        </authorList>
    </citation>
    <scope>NUCLEOTIDE SEQUENCE [LARGE SCALE MRNA] (ISOFORM 1)</scope>
    <source>
        <tissue>Coronary arterial endothelium</tissue>
        <tissue>Testis</tissue>
    </source>
</reference>
<reference key="6">
    <citation type="journal article" date="2003" name="Nature">
        <title>The DNA sequence and analysis of human chromosome 14.</title>
        <authorList>
            <person name="Heilig R."/>
            <person name="Eckenberg R."/>
            <person name="Petit J.-L."/>
            <person name="Fonknechten N."/>
            <person name="Da Silva C."/>
            <person name="Cattolico L."/>
            <person name="Levy M."/>
            <person name="Barbe V."/>
            <person name="De Berardinis V."/>
            <person name="Ureta-Vidal A."/>
            <person name="Pelletier E."/>
            <person name="Vico V."/>
            <person name="Anthouard V."/>
            <person name="Rowen L."/>
            <person name="Madan A."/>
            <person name="Qin S."/>
            <person name="Sun H."/>
            <person name="Du H."/>
            <person name="Pepin K."/>
            <person name="Artiguenave F."/>
            <person name="Robert C."/>
            <person name="Cruaud C."/>
            <person name="Bruels T."/>
            <person name="Jaillon O."/>
            <person name="Friedlander L."/>
            <person name="Samson G."/>
            <person name="Brottier P."/>
            <person name="Cure S."/>
            <person name="Segurens B."/>
            <person name="Aniere F."/>
            <person name="Samain S."/>
            <person name="Crespeau H."/>
            <person name="Abbasi N."/>
            <person name="Aiach N."/>
            <person name="Boscus D."/>
            <person name="Dickhoff R."/>
            <person name="Dors M."/>
            <person name="Dubois I."/>
            <person name="Friedman C."/>
            <person name="Gouyvenoux M."/>
            <person name="James R."/>
            <person name="Madan A."/>
            <person name="Mairey-Estrada B."/>
            <person name="Mangenot S."/>
            <person name="Martins N."/>
            <person name="Menard M."/>
            <person name="Oztas S."/>
            <person name="Ratcliffe A."/>
            <person name="Shaffer T."/>
            <person name="Trask B."/>
            <person name="Vacherie B."/>
            <person name="Bellemere C."/>
            <person name="Belser C."/>
            <person name="Besnard-Gonnet M."/>
            <person name="Bartol-Mavel D."/>
            <person name="Boutard M."/>
            <person name="Briez-Silla S."/>
            <person name="Combette S."/>
            <person name="Dufosse-Laurent V."/>
            <person name="Ferron C."/>
            <person name="Lechaplais C."/>
            <person name="Louesse C."/>
            <person name="Muselet D."/>
            <person name="Magdelenat G."/>
            <person name="Pateau E."/>
            <person name="Petit E."/>
            <person name="Sirvain-Trukniewicz P."/>
            <person name="Trybou A."/>
            <person name="Vega-Czarny N."/>
            <person name="Bataille E."/>
            <person name="Bluet E."/>
            <person name="Bordelais I."/>
            <person name="Dubois M."/>
            <person name="Dumont C."/>
            <person name="Guerin T."/>
            <person name="Haffray S."/>
            <person name="Hammadi R."/>
            <person name="Muanga J."/>
            <person name="Pellouin V."/>
            <person name="Robert D."/>
            <person name="Wunderle E."/>
            <person name="Gauguet G."/>
            <person name="Roy A."/>
            <person name="Sainte-Marthe L."/>
            <person name="Verdier J."/>
            <person name="Verdier-Discala C."/>
            <person name="Hillier L.W."/>
            <person name="Fulton L."/>
            <person name="McPherson J."/>
            <person name="Matsuda F."/>
            <person name="Wilson R."/>
            <person name="Scarpelli C."/>
            <person name="Gyapay G."/>
            <person name="Wincker P."/>
            <person name="Saurin W."/>
            <person name="Quetier F."/>
            <person name="Waterston R."/>
            <person name="Hood L."/>
            <person name="Weissenbach J."/>
        </authorList>
    </citation>
    <scope>NUCLEOTIDE SEQUENCE [LARGE SCALE GENOMIC DNA]</scope>
</reference>
<reference key="7">
    <citation type="journal article" date="2004" name="Genome Res.">
        <title>The status, quality, and expansion of the NIH full-length cDNA project: the Mammalian Gene Collection (MGC).</title>
        <authorList>
            <consortium name="The MGC Project Team"/>
        </authorList>
    </citation>
    <scope>NUCLEOTIDE SEQUENCE [LARGE SCALE MRNA] (ISOFORM 1)</scope>
    <source>
        <tissue>Lung</tissue>
    </source>
</reference>
<reference key="8">
    <citation type="submission" date="1996-11" db="EMBL/GenBank/DDBJ databases">
        <authorList>
            <person name="Kim Y.-J."/>
        </authorList>
    </citation>
    <scope>NUCLEOTIDE SEQUENCE [MRNA] OF 1-157 (ISOFORM 1)</scope>
</reference>
<reference key="9">
    <citation type="journal article" date="1999" name="Int. J. Cancer">
        <title>Antigens recognized by autologous antibody in patients with renal-cell carcinoma.</title>
        <authorList>
            <person name="Scanlan M.J."/>
            <person name="Gordan J.D."/>
            <person name="Williamson B."/>
            <person name="Stockert E."/>
            <person name="Bander N.H."/>
            <person name="Jongeneel C.V."/>
            <person name="Gure A.O."/>
            <person name="Jaeger D."/>
            <person name="Jaeger E."/>
            <person name="Knuth A."/>
            <person name="Chen Y.-T."/>
            <person name="Old L.J."/>
        </authorList>
    </citation>
    <scope>NUCLEOTIDE SEQUENCE [MRNA] OF 10-246 (ISOFORM 1)</scope>
    <scope>IDENTIFICATION AS A RENAL CANCER ANTIGEN</scope>
    <source>
        <tissue>Renal cell carcinoma</tissue>
    </source>
</reference>
<reference key="10">
    <citation type="journal article" date="1999" name="Nature">
        <title>Composite co-activator ARC mediates chromatin-directed transcriptional activation.</title>
        <authorList>
            <person name="Naeaer A.M."/>
            <person name="Beaurang P.A."/>
            <person name="Zhou S."/>
            <person name="Abraham S."/>
            <person name="Solomon W.B."/>
            <person name="Tjian R."/>
        </authorList>
    </citation>
    <scope>PROTEIN SEQUENCE OF 200-208 AND 227-236</scope>
    <scope>IDENTIFICATION IN THE ARC COMPLEX</scope>
</reference>
<reference key="11">
    <citation type="journal article" date="1999" name="Mol. Cell">
        <title>A novel human SRB/MED-containing cofactor complex, SMCC, involved in transcription regulation.</title>
        <authorList>
            <person name="Gu W."/>
            <person name="Malik S."/>
            <person name="Ito M."/>
            <person name="Yuan C.-X."/>
            <person name="Fondell J.D."/>
            <person name="Zhang X."/>
            <person name="Martinez E."/>
            <person name="Qin J."/>
            <person name="Roeder R.G."/>
        </authorList>
    </citation>
    <scope>IDENTIFICATION BY MASS SPECTROMETRY</scope>
    <scope>IDENTIFICATION IN THE SMCC COMPLEX</scope>
</reference>
<reference key="12">
    <citation type="journal article" date="1999" name="Mol. Cell">
        <authorList>
            <person name="Gu W."/>
            <person name="Malik S."/>
            <person name="Ito M."/>
            <person name="Yuan C.-X."/>
            <person name="Fondell J.D."/>
            <person name="Zhang X."/>
            <person name="Martinez E."/>
            <person name="Qin J."/>
            <person name="Roeder R.G."/>
        </authorList>
    </citation>
    <scope>ERRATUM OF PUBMED:10024883</scope>
</reference>
<reference key="13">
    <citation type="journal article" date="2000" name="Nature">
        <title>TFIIH is negatively regulated by cdk8-containing mediator complexes.</title>
        <authorList>
            <person name="Akoulitchev S."/>
            <person name="Chuikov S."/>
            <person name="Reinberg D."/>
        </authorList>
    </citation>
    <scope>INTERACTION WITH CCNC; MED10 AND MED23</scope>
</reference>
<reference key="14">
    <citation type="journal article" date="2002" name="Proc. Natl. Acad. Sci. U.S.A.">
        <title>The TRAP/Mediator coactivator complex interacts directly with estrogen receptors alpha and beta through the TRAP220 subunit and directly enhances estrogen receptor function in vitro.</title>
        <authorList>
            <person name="Kang Y.K."/>
            <person name="Guermah M."/>
            <person name="Yuan C.-X."/>
            <person name="Roeder R.G."/>
        </authorList>
    </citation>
    <scope>IDENTIFICATION BY MASS SPECTROMETRY</scope>
    <scope>IDENTIFICATION IN THE MEDIATOR COMPLEX</scope>
    <scope>INTERACTION OF THE MEDIATOR COMPLEX WITH ESR1 AND ESR2</scope>
</reference>
<reference key="15">
    <citation type="journal article" date="2004" name="Mol. Cell">
        <title>A set of consensus mammalian mediator subunits identified by multidimensional protein identification technology.</title>
        <authorList>
            <person name="Sato S."/>
            <person name="Tomomori-Sato C."/>
            <person name="Parmely T.J."/>
            <person name="Florens L."/>
            <person name="Zybailov B."/>
            <person name="Swanson S.K."/>
            <person name="Banks C.A.S."/>
            <person name="Jin J."/>
            <person name="Cai Y."/>
            <person name="Washburn M.P."/>
            <person name="Conaway J.W."/>
            <person name="Conaway R.C."/>
        </authorList>
    </citation>
    <scope>IDENTIFICATION BY MASS SPECTROMETRY</scope>
    <scope>IDENTIFICATION IN THE MEDIATOR COMPLEX</scope>
</reference>
<reference key="16">
    <citation type="journal article" date="2005" name="Mol. Cell">
        <title>MED1/TRAP220 exists predominantly in a TRAP/Mediator subpopulation enriched in RNA polymerase II and is required for ER-mediated transcription.</title>
        <authorList>
            <person name="Zhang X."/>
            <person name="Krutchinsky A."/>
            <person name="Fukuda A."/>
            <person name="Chen W."/>
            <person name="Yamamura S."/>
            <person name="Chait B.T."/>
            <person name="Roeder R.G."/>
        </authorList>
    </citation>
    <scope>INTERACTION WITH MED1; MED21 AND MED30</scope>
    <scope>IDENTIFICATION BY MASS SPECTROMETRY</scope>
    <scope>IDENTIFICATION IN THE MEDIATOR COMPLEX</scope>
    <scope>ASSOCIATION OF THE MEDIATOR COMPLEX WITH RNA POLYMERASE II</scope>
</reference>
<reference key="17">
    <citation type="journal article" date="2006" name="J. Biol. Chem.">
        <title>Regulation of Aurora-A kinase gene expression via GABP recruitment of TRAP220/MED1.</title>
        <authorList>
            <person name="Udayakumar T.S."/>
            <person name="Belakavadi M."/>
            <person name="Choi K.-H."/>
            <person name="Pandey P.K."/>
            <person name="Fondell J.D."/>
        </authorList>
    </citation>
    <scope>ASSOCIATION WITH PROMOTER REGIONS</scope>
</reference>
<reference key="18">
    <citation type="journal article" date="2006" name="J. Biol. Chem.">
        <title>Human Mediator enhances basal transcription by facilitating recruitment of transcription factor IIB during preinitiation complex assembly.</title>
        <authorList>
            <person name="Baek H.J."/>
            <person name="Kang Y.K."/>
            <person name="Roeder R.G."/>
        </authorList>
    </citation>
    <scope>FUNCTION</scope>
    <scope>INTERACTION WITH MED 1 AND MED10</scope>
</reference>
<reference key="19">
    <citation type="journal article" date="2006" name="Mol. Cell. Biol.">
        <title>Mediator modulates Gli3-dependent Sonic hedgehog signaling.</title>
        <authorList>
            <person name="Zhou H."/>
            <person name="Kim S."/>
            <person name="Ishii S."/>
            <person name="Boyer T.G."/>
        </authorList>
    </citation>
    <scope>INTERACTION WITH CDK8; CTNNB1 AND GLI3</scope>
</reference>
<reference key="20">
    <citation type="journal article" date="2009" name="Science">
        <title>Lysine acetylation targets protein complexes and co-regulates major cellular functions.</title>
        <authorList>
            <person name="Choudhary C."/>
            <person name="Kumar C."/>
            <person name="Gnad F."/>
            <person name="Nielsen M.L."/>
            <person name="Rehman M."/>
            <person name="Walther T.C."/>
            <person name="Olsen J.V."/>
            <person name="Mann M."/>
        </authorList>
    </citation>
    <scope>ACETYLATION [LARGE SCALE ANALYSIS] AT LYS-236 AND LYS-241</scope>
    <scope>IDENTIFICATION BY MASS SPECTROMETRY [LARGE SCALE ANALYSIS]</scope>
</reference>
<reference key="21">
    <citation type="journal article" date="2011" name="BMC Syst. Biol.">
        <title>Initial characterization of the human central proteome.</title>
        <authorList>
            <person name="Burkard T.R."/>
            <person name="Planyavsky M."/>
            <person name="Kaupe I."/>
            <person name="Breitwieser F.P."/>
            <person name="Buerckstuemmer T."/>
            <person name="Bennett K.L."/>
            <person name="Superti-Furga G."/>
            <person name="Colinge J."/>
        </authorList>
    </citation>
    <scope>IDENTIFICATION BY MASS SPECTROMETRY [LARGE SCALE ANALYSIS]</scope>
</reference>
<reference key="22">
    <citation type="journal article" date="2015" name="Proteomics">
        <title>N-terminome analysis of the human mitochondrial proteome.</title>
        <authorList>
            <person name="Vaca Jacome A.S."/>
            <person name="Rabilloud T."/>
            <person name="Schaeffer-Reiss C."/>
            <person name="Rompais M."/>
            <person name="Ayoub D."/>
            <person name="Lane L."/>
            <person name="Bairoch A."/>
            <person name="Van Dorsselaer A."/>
            <person name="Carapito C."/>
        </authorList>
    </citation>
    <scope>IDENTIFICATION BY MASS SPECTROMETRY [LARGE SCALE ANALYSIS]</scope>
</reference>
<reference key="23">
    <citation type="journal article" date="2017" name="Nat. Struct. Mol. Biol.">
        <title>Site-specific mapping of the human SUMO proteome reveals co-modification with phosphorylation.</title>
        <authorList>
            <person name="Hendriks I.A."/>
            <person name="Lyon D."/>
            <person name="Young C."/>
            <person name="Jensen L.J."/>
            <person name="Vertegaal A.C."/>
            <person name="Nielsen M.L."/>
        </authorList>
    </citation>
    <scope>SUMOYLATION [LARGE SCALE ANALYSIS] AT LYS-208</scope>
    <scope>IDENTIFICATION BY MASS SPECTROMETRY [LARGE SCALE ANALYSIS]</scope>
</reference>
<keyword id="KW-0002">3D-structure</keyword>
<keyword id="KW-0007">Acetylation</keyword>
<keyword id="KW-0010">Activator</keyword>
<keyword id="KW-0025">Alternative splicing</keyword>
<keyword id="KW-0903">Direct protein sequencing</keyword>
<keyword id="KW-1017">Isopeptide bond</keyword>
<keyword id="KW-0539">Nucleus</keyword>
<keyword id="KW-1267">Proteomics identification</keyword>
<keyword id="KW-1185">Reference proteome</keyword>
<keyword id="KW-0804">Transcription</keyword>
<keyword id="KW-0805">Transcription regulation</keyword>
<keyword id="KW-0832">Ubl conjugation</keyword>
<proteinExistence type="evidence at protein level"/>
<name>MED6_HUMAN</name>
<gene>
    <name type="primary">MED6</name>
    <name type="synonym">ARC33</name>
</gene>
<dbReference type="EMBL" id="AF074723">
    <property type="protein sequence ID" value="AAC26869.1"/>
    <property type="molecule type" value="mRNA"/>
</dbReference>
<dbReference type="EMBL" id="BT006831">
    <property type="protein sequence ID" value="AAP35477.1"/>
    <property type="molecule type" value="mRNA"/>
</dbReference>
<dbReference type="EMBL" id="CR541697">
    <property type="protein sequence ID" value="CAG46498.1"/>
    <property type="molecule type" value="mRNA"/>
</dbReference>
<dbReference type="EMBL" id="AK300460">
    <property type="protein sequence ID" value="BAG62179.1"/>
    <property type="molecule type" value="mRNA"/>
</dbReference>
<dbReference type="EMBL" id="AK304361">
    <property type="protein sequence ID" value="BAG65202.1"/>
    <property type="molecule type" value="mRNA"/>
</dbReference>
<dbReference type="EMBL" id="AK222587">
    <property type="protein sequence ID" value="BAD96307.1"/>
    <property type="molecule type" value="mRNA"/>
</dbReference>
<dbReference type="EMBL" id="AK223346">
    <property type="protein sequence ID" value="BAD97066.1"/>
    <property type="molecule type" value="mRNA"/>
</dbReference>
<dbReference type="EMBL" id="AL357153">
    <property type="status" value="NOT_ANNOTATED_CDS"/>
    <property type="molecule type" value="Genomic_DNA"/>
</dbReference>
<dbReference type="EMBL" id="BC004106">
    <property type="protein sequence ID" value="AAH04106.1"/>
    <property type="molecule type" value="mRNA"/>
</dbReference>
<dbReference type="EMBL" id="U78082">
    <property type="protein sequence ID" value="AAB84363.1"/>
    <property type="molecule type" value="mRNA"/>
</dbReference>
<dbReference type="EMBL" id="AF155104">
    <property type="protein sequence ID" value="AAD42870.1"/>
    <property type="molecule type" value="mRNA"/>
</dbReference>
<dbReference type="CCDS" id="CCDS61483.1">
    <molecule id="O75586-3"/>
</dbReference>
<dbReference type="CCDS" id="CCDS61484.1">
    <molecule id="O75586-2"/>
</dbReference>
<dbReference type="CCDS" id="CCDS9805.1">
    <molecule id="O75586-1"/>
</dbReference>
<dbReference type="RefSeq" id="NP_001271138.1">
    <molecule id="O75586-2"/>
    <property type="nucleotide sequence ID" value="NM_001284209.2"/>
</dbReference>
<dbReference type="RefSeq" id="NP_001271139.1">
    <molecule id="O75586-3"/>
    <property type="nucleotide sequence ID" value="NM_001284210.2"/>
</dbReference>
<dbReference type="RefSeq" id="NP_001271140.1">
    <property type="nucleotide sequence ID" value="NM_001284211.1"/>
</dbReference>
<dbReference type="RefSeq" id="NP_005457.2">
    <molecule id="O75586-1"/>
    <property type="nucleotide sequence ID" value="NM_005466.3"/>
</dbReference>
<dbReference type="PDB" id="7EMF">
    <property type="method" value="EM"/>
    <property type="resolution" value="3.50 A"/>
    <property type="chains" value="F=1-246"/>
</dbReference>
<dbReference type="PDB" id="7ENA">
    <property type="method" value="EM"/>
    <property type="resolution" value="4.07 A"/>
    <property type="chains" value="f=1-246"/>
</dbReference>
<dbReference type="PDB" id="7ENC">
    <property type="method" value="EM"/>
    <property type="resolution" value="4.13 A"/>
    <property type="chains" value="f=1-246"/>
</dbReference>
<dbReference type="PDB" id="7ENJ">
    <property type="method" value="EM"/>
    <property type="resolution" value="4.40 A"/>
    <property type="chains" value="F=1-246"/>
</dbReference>
<dbReference type="PDB" id="7LBM">
    <property type="method" value="EM"/>
    <property type="resolution" value="4.80 A"/>
    <property type="chains" value="g=1-246"/>
</dbReference>
<dbReference type="PDB" id="7NVR">
    <property type="method" value="EM"/>
    <property type="resolution" value="4.50 A"/>
    <property type="chains" value="a=1-246"/>
</dbReference>
<dbReference type="PDB" id="8GXQ">
    <property type="method" value="EM"/>
    <property type="resolution" value="5.04 A"/>
    <property type="chains" value="f=1-246"/>
</dbReference>
<dbReference type="PDB" id="8GXS">
    <property type="method" value="EM"/>
    <property type="resolution" value="4.16 A"/>
    <property type="chains" value="f=1-246"/>
</dbReference>
<dbReference type="PDB" id="8T9D">
    <property type="method" value="EM"/>
    <property type="resolution" value="4.66 A"/>
    <property type="chains" value="C=1-246"/>
</dbReference>
<dbReference type="PDB" id="8TQW">
    <property type="method" value="EM"/>
    <property type="resolution" value="8.20 A"/>
    <property type="chains" value="F=1-246"/>
</dbReference>
<dbReference type="PDB" id="8TRH">
    <property type="method" value="EM"/>
    <property type="resolution" value="3.70 A"/>
    <property type="chains" value="F=1-246"/>
</dbReference>
<dbReference type="PDBsum" id="7EMF"/>
<dbReference type="PDBsum" id="7ENA"/>
<dbReference type="PDBsum" id="7ENC"/>
<dbReference type="PDBsum" id="7ENJ"/>
<dbReference type="PDBsum" id="7LBM"/>
<dbReference type="PDBsum" id="7NVR"/>
<dbReference type="PDBsum" id="8GXQ"/>
<dbReference type="PDBsum" id="8GXS"/>
<dbReference type="PDBsum" id="8T9D"/>
<dbReference type="PDBsum" id="8TQW"/>
<dbReference type="PDBsum" id="8TRH"/>
<dbReference type="EMDB" id="EMD-12610"/>
<dbReference type="EMDB" id="EMD-23255"/>
<dbReference type="EMDB" id="EMD-31191"/>
<dbReference type="EMDB" id="EMD-31204"/>
<dbReference type="EMDB" id="EMD-31207"/>
<dbReference type="EMDB" id="EMD-31211"/>
<dbReference type="EMDB" id="EMD-34359"/>
<dbReference type="EMDB" id="EMD-34360"/>
<dbReference type="EMDB" id="EMD-41107"/>
<dbReference type="EMDB" id="EMD-41565"/>
<dbReference type="EMDB" id="EMD-41580"/>
<dbReference type="SMR" id="O75586"/>
<dbReference type="BioGRID" id="115319">
    <property type="interactions" value="98"/>
</dbReference>
<dbReference type="ComplexPortal" id="CPX-3227">
    <property type="entry name" value="Core mediator complex"/>
</dbReference>
<dbReference type="CORUM" id="O75586"/>
<dbReference type="DIP" id="DIP-31456N"/>
<dbReference type="FunCoup" id="O75586">
    <property type="interactions" value="3285"/>
</dbReference>
<dbReference type="IntAct" id="O75586">
    <property type="interactions" value="60"/>
</dbReference>
<dbReference type="MINT" id="O75586"/>
<dbReference type="STRING" id="9606.ENSP00000481920"/>
<dbReference type="GlyGen" id="O75586">
    <property type="glycosylation" value="1 site, 1 O-linked glycan (1 site)"/>
</dbReference>
<dbReference type="iPTMnet" id="O75586"/>
<dbReference type="PhosphoSitePlus" id="O75586"/>
<dbReference type="BioMuta" id="MED6"/>
<dbReference type="jPOST" id="O75586"/>
<dbReference type="MassIVE" id="O75586"/>
<dbReference type="PaxDb" id="9606-ENSP00000481920"/>
<dbReference type="PeptideAtlas" id="O75586"/>
<dbReference type="ProteomicsDB" id="50100">
    <molecule id="O75586-1"/>
</dbReference>
<dbReference type="ProteomicsDB" id="5142"/>
<dbReference type="ProteomicsDB" id="5839"/>
<dbReference type="Pumba" id="O75586"/>
<dbReference type="Antibodypedia" id="25135">
    <property type="antibodies" value="297 antibodies from 28 providers"/>
</dbReference>
<dbReference type="DNASU" id="10001"/>
<dbReference type="Ensembl" id="ENST00000256379.10">
    <molecule id="O75586-1"/>
    <property type="protein sequence ID" value="ENSP00000256379.5"/>
    <property type="gene ID" value="ENSG00000133997.12"/>
</dbReference>
<dbReference type="Ensembl" id="ENST00000430055.6">
    <molecule id="O75586-2"/>
    <property type="protein sequence ID" value="ENSP00000413343.2"/>
    <property type="gene ID" value="ENSG00000133997.12"/>
</dbReference>
<dbReference type="Ensembl" id="ENST00000440435.2">
    <molecule id="O75586-3"/>
    <property type="protein sequence ID" value="ENSP00000394502.2"/>
    <property type="gene ID" value="ENSG00000133997.12"/>
</dbReference>
<dbReference type="GeneID" id="10001"/>
<dbReference type="KEGG" id="hsa:10001"/>
<dbReference type="MANE-Select" id="ENST00000256379.10">
    <property type="protein sequence ID" value="ENSP00000256379.5"/>
    <property type="RefSeq nucleotide sequence ID" value="NM_005466.4"/>
    <property type="RefSeq protein sequence ID" value="NP_005457.2"/>
</dbReference>
<dbReference type="UCSC" id="uc001xmf.5">
    <molecule id="O75586-1"/>
    <property type="organism name" value="human"/>
</dbReference>
<dbReference type="AGR" id="HGNC:19970"/>
<dbReference type="CTD" id="10001"/>
<dbReference type="DisGeNET" id="10001"/>
<dbReference type="GeneCards" id="MED6"/>
<dbReference type="HGNC" id="HGNC:19970">
    <property type="gene designation" value="MED6"/>
</dbReference>
<dbReference type="HPA" id="ENSG00000133997">
    <property type="expression patterns" value="Low tissue specificity"/>
</dbReference>
<dbReference type="MIM" id="602984">
    <property type="type" value="gene"/>
</dbReference>
<dbReference type="neXtProt" id="NX_O75586"/>
<dbReference type="OpenTargets" id="ENSG00000133997"/>
<dbReference type="PharmGKB" id="PA134868263"/>
<dbReference type="VEuPathDB" id="HostDB:ENSG00000133997"/>
<dbReference type="eggNOG" id="KOG3169">
    <property type="taxonomic scope" value="Eukaryota"/>
</dbReference>
<dbReference type="GeneTree" id="ENSGT00390000017666"/>
<dbReference type="HOGENOM" id="CLU_077754_1_0_1"/>
<dbReference type="InParanoid" id="O75586"/>
<dbReference type="OMA" id="KKDMKPP"/>
<dbReference type="OrthoDB" id="344220at2759"/>
<dbReference type="PAN-GO" id="O75586">
    <property type="GO annotations" value="4 GO annotations based on evolutionary models"/>
</dbReference>
<dbReference type="PhylomeDB" id="O75586"/>
<dbReference type="TreeFam" id="TF313577"/>
<dbReference type="PathwayCommons" id="O75586"/>
<dbReference type="Reactome" id="R-HSA-1989781">
    <property type="pathway name" value="PPARA activates gene expression"/>
</dbReference>
<dbReference type="Reactome" id="R-HSA-212436">
    <property type="pathway name" value="Generic Transcription Pathway"/>
</dbReference>
<dbReference type="Reactome" id="R-HSA-381340">
    <property type="pathway name" value="Transcriptional regulation of white adipocyte differentiation"/>
</dbReference>
<dbReference type="Reactome" id="R-HSA-9833110">
    <property type="pathway name" value="RSV-host interactions"/>
</dbReference>
<dbReference type="Reactome" id="R-HSA-9841922">
    <property type="pathway name" value="MLL4 and MLL3 complexes regulate expression of PPARG target genes in adipogenesis and hepatic steatosis"/>
</dbReference>
<dbReference type="SignaLink" id="O75586"/>
<dbReference type="SIGNOR" id="O75586"/>
<dbReference type="BioGRID-ORCS" id="10001">
    <property type="hits" value="795 hits in 1173 CRISPR screens"/>
</dbReference>
<dbReference type="GeneWiki" id="MED6"/>
<dbReference type="GenomeRNAi" id="10001"/>
<dbReference type="Pharos" id="O75586">
    <property type="development level" value="Tbio"/>
</dbReference>
<dbReference type="PRO" id="PR:O75586"/>
<dbReference type="Proteomes" id="UP000005640">
    <property type="component" value="Chromosome 14"/>
</dbReference>
<dbReference type="RNAct" id="O75586">
    <property type="molecule type" value="protein"/>
</dbReference>
<dbReference type="Bgee" id="ENSG00000133997">
    <property type="expression patterns" value="Expressed in calcaneal tendon and 179 other cell types or tissues"/>
</dbReference>
<dbReference type="ExpressionAtlas" id="O75586">
    <property type="expression patterns" value="baseline and differential"/>
</dbReference>
<dbReference type="GO" id="GO:0070847">
    <property type="term" value="C:core mediator complex"/>
    <property type="evidence" value="ECO:0000353"/>
    <property type="project" value="ComplexPortal"/>
</dbReference>
<dbReference type="GO" id="GO:0016592">
    <property type="term" value="C:mediator complex"/>
    <property type="evidence" value="ECO:0000314"/>
    <property type="project" value="MGI"/>
</dbReference>
<dbReference type="GO" id="GO:0016020">
    <property type="term" value="C:membrane"/>
    <property type="evidence" value="ECO:0007005"/>
    <property type="project" value="UniProtKB"/>
</dbReference>
<dbReference type="GO" id="GO:0005654">
    <property type="term" value="C:nucleoplasm"/>
    <property type="evidence" value="ECO:0000314"/>
    <property type="project" value="HPA"/>
</dbReference>
<dbReference type="GO" id="GO:0005634">
    <property type="term" value="C:nucleus"/>
    <property type="evidence" value="ECO:0000314"/>
    <property type="project" value="ComplexPortal"/>
</dbReference>
<dbReference type="GO" id="GO:0000151">
    <property type="term" value="C:ubiquitin ligase complex"/>
    <property type="evidence" value="ECO:0007669"/>
    <property type="project" value="Ensembl"/>
</dbReference>
<dbReference type="GO" id="GO:0003677">
    <property type="term" value="F:DNA binding"/>
    <property type="evidence" value="ECO:0007669"/>
    <property type="project" value="Ensembl"/>
</dbReference>
<dbReference type="GO" id="GO:0003713">
    <property type="term" value="F:transcription coactivator activity"/>
    <property type="evidence" value="ECO:0000314"/>
    <property type="project" value="MGI"/>
</dbReference>
<dbReference type="GO" id="GO:0001223">
    <property type="term" value="F:transcription coactivator binding"/>
    <property type="evidence" value="ECO:0000353"/>
    <property type="project" value="UniProtKB"/>
</dbReference>
<dbReference type="GO" id="GO:0061630">
    <property type="term" value="F:ubiquitin protein ligase activity"/>
    <property type="evidence" value="ECO:0007669"/>
    <property type="project" value="Ensembl"/>
</dbReference>
<dbReference type="GO" id="GO:0045944">
    <property type="term" value="P:positive regulation of transcription by RNA polymerase II"/>
    <property type="evidence" value="ECO:0000314"/>
    <property type="project" value="MGI"/>
</dbReference>
<dbReference type="GO" id="GO:0032968">
    <property type="term" value="P:positive regulation of transcription elongation by RNA polymerase II"/>
    <property type="evidence" value="ECO:0000303"/>
    <property type="project" value="ComplexPortal"/>
</dbReference>
<dbReference type="GO" id="GO:0060261">
    <property type="term" value="P:positive regulation of transcription initiation by RNA polymerase II"/>
    <property type="evidence" value="ECO:0000303"/>
    <property type="project" value="ComplexPortal"/>
</dbReference>
<dbReference type="GO" id="GO:0016567">
    <property type="term" value="P:protein ubiquitination"/>
    <property type="evidence" value="ECO:0007669"/>
    <property type="project" value="Ensembl"/>
</dbReference>
<dbReference type="GO" id="GO:0006357">
    <property type="term" value="P:regulation of transcription by RNA polymerase II"/>
    <property type="evidence" value="ECO:0000318"/>
    <property type="project" value="GO_Central"/>
</dbReference>
<dbReference type="GO" id="GO:0051123">
    <property type="term" value="P:RNA polymerase II preinitiation complex assembly"/>
    <property type="evidence" value="ECO:0000303"/>
    <property type="project" value="ComplexPortal"/>
</dbReference>
<dbReference type="GO" id="GO:0035019">
    <property type="term" value="P:somatic stem cell population maintenance"/>
    <property type="evidence" value="ECO:0007669"/>
    <property type="project" value="Ensembl"/>
</dbReference>
<dbReference type="FunFam" id="3.10.450.580:FF:000001">
    <property type="entry name" value="Mediator of RNA polymerase II transcription subunit 6"/>
    <property type="match status" value="1"/>
</dbReference>
<dbReference type="Gene3D" id="3.10.450.580">
    <property type="entry name" value="Mediator complex, subunit Med6"/>
    <property type="match status" value="1"/>
</dbReference>
<dbReference type="InterPro" id="IPR007018">
    <property type="entry name" value="Mediator_Med6"/>
</dbReference>
<dbReference type="InterPro" id="IPR016820">
    <property type="entry name" value="Mediator_Med6_met/pln"/>
</dbReference>
<dbReference type="InterPro" id="IPR038566">
    <property type="entry name" value="Mediator_Med6_sf"/>
</dbReference>
<dbReference type="PANTHER" id="PTHR13104">
    <property type="entry name" value="MED-6-RELATED"/>
    <property type="match status" value="1"/>
</dbReference>
<dbReference type="Pfam" id="PF04934">
    <property type="entry name" value="Med6"/>
    <property type="match status" value="1"/>
</dbReference>
<dbReference type="PIRSF" id="PIRSF023869">
    <property type="entry name" value="Mediator_MED6_meta/pln"/>
    <property type="match status" value="1"/>
</dbReference>
<evidence type="ECO:0000256" key="1">
    <source>
        <dbReference type="SAM" id="MobiDB-lite"/>
    </source>
</evidence>
<evidence type="ECO:0000269" key="2">
    <source>
    </source>
</evidence>
<evidence type="ECO:0000269" key="3">
    <source>
    </source>
</evidence>
<evidence type="ECO:0000269" key="4">
    <source>
    </source>
</evidence>
<evidence type="ECO:0000269" key="5">
    <source>
    </source>
</evidence>
<evidence type="ECO:0000269" key="6">
    <source>
    </source>
</evidence>
<evidence type="ECO:0000269" key="7">
    <source>
    </source>
</evidence>
<evidence type="ECO:0000269" key="8">
    <source>
    </source>
</evidence>
<evidence type="ECO:0000269" key="9">
    <source>
    </source>
</evidence>
<evidence type="ECO:0000269" key="10">
    <source>
    </source>
</evidence>
<evidence type="ECO:0000303" key="11">
    <source>
    </source>
</evidence>
<evidence type="ECO:0000305" key="12"/>
<evidence type="ECO:0007744" key="13">
    <source>
    </source>
</evidence>
<evidence type="ECO:0007744" key="14">
    <source>
    </source>
</evidence>
<evidence type="ECO:0007829" key="15">
    <source>
        <dbReference type="PDB" id="7EMF"/>
    </source>
</evidence>
<comment type="function">
    <text evidence="8">Component of the Mediator complex, a coactivator involved in the regulated transcription of nearly all RNA polymerase II-dependent genes. Mediator functions as a bridge to convey information from gene-specific regulatory proteins to the basal RNA polymerase II transcription machinery. Mediator is recruited to promoters by direct interactions with regulatory proteins and serves as a scaffold for the assembly of a functional preinitiation complex with RNA polymerase II and the general transcription factors.</text>
</comment>
<comment type="subunit">
    <text evidence="2 3 4 5 6 7 8 9 10">Component of the Mediator complex, which is composed of MED1, MED4, MED6, MED7, MED8, MED9, MED10, MED11, MED12, MED13, MED13L, MED14, MED15, MED16, MED17, MED18, MED19, MED20, MED21, MED22, MED23, MED24, MED25, MED26, MED27, MED29, MED30, MED31, CCNC, CDK8 and CDC2L6/CDK11. The MED12, MED13, CCNC and CDK8 subunits form a distinct module termed the CDK8 module. Mediator containing the CDK8 module is less active than Mediator lacking this module in supporting transcriptional activation. Individual preparations of the Mediator complex lacking one or more distinct subunits have been variously termed ARC, CRSP, DRIP, PC2, SMCC and TRAP. Interacts with CTNNB1 and GLI3.</text>
</comment>
<comment type="interaction">
    <interactant intactId="EBI-394624">
        <id>O75586</id>
    </interactant>
    <interactant intactId="EBI-359390">
        <id>Q13616</id>
        <label>CUL1</label>
    </interactant>
    <organismsDiffer>false</organismsDiffer>
    <experiments>2</experiments>
</comment>
<comment type="interaction">
    <interactant intactId="EBI-394624">
        <id>O75586</id>
    </interactant>
    <interactant intactId="EBI-394562">
        <id>Q9NVC6</id>
        <label>MED17</label>
    </interactant>
    <organismsDiffer>false</organismsDiffer>
    <experiments>5</experiments>
</comment>
<comment type="interaction">
    <interactant intactId="EBI-394624">
        <id>O75586</id>
    </interactant>
    <interactant intactId="EBI-394640">
        <id>Q9BUE0</id>
        <label>MED18</label>
    </interactant>
    <organismsDiffer>false</organismsDiffer>
    <experiments>6</experiments>
</comment>
<comment type="interaction">
    <interactant intactId="EBI-394624">
        <id>O75586</id>
    </interactant>
    <interactant intactId="EBI-394603">
        <id>Q6P2C8</id>
        <label>MED27</label>
    </interactant>
    <organismsDiffer>false</organismsDiffer>
    <experiments>4</experiments>
</comment>
<comment type="interaction">
    <interactant intactId="EBI-394624">
        <id>O75586</id>
    </interactant>
    <interactant intactId="EBI-514199">
        <id>Q9H204</id>
        <label>MED28</label>
    </interactant>
    <organismsDiffer>false</organismsDiffer>
    <experiments>5</experiments>
</comment>
<comment type="interaction">
    <interactant intactId="EBI-394624">
        <id>O75586</id>
    </interactant>
    <interactant intactId="EBI-394656">
        <id>Q9NX70</id>
        <label>MED29</label>
    </interactant>
    <organismsDiffer>false</organismsDiffer>
    <experiments>7</experiments>
</comment>
<comment type="interaction">
    <interactant intactId="EBI-394624">
        <id>O75586</id>
    </interactant>
    <interactant intactId="EBI-398698">
        <id>Q9R0X0</id>
        <label>Med20</label>
    </interactant>
    <organismsDiffer>true</organismsDiffer>
    <experiments>2</experiments>
</comment>
<comment type="interaction">
    <interactant intactId="EBI-394624">
        <id>O75586</id>
    </interactant>
    <interactant intactId="EBI-7990252">
        <id>Q9D7W5</id>
        <label>Med8</label>
    </interactant>
    <organismsDiffer>true</organismsDiffer>
    <experiments>2</experiments>
</comment>
<comment type="subcellular location">
    <subcellularLocation>
        <location>Nucleus</location>
    </subcellularLocation>
</comment>
<comment type="alternative products">
    <event type="alternative splicing"/>
    <isoform>
        <id>O75586-1</id>
        <name>1</name>
        <sequence type="displayed"/>
    </isoform>
    <isoform>
        <id>O75586-2</id>
        <name>2</name>
        <sequence type="described" ref="VSP_054589"/>
    </isoform>
    <isoform>
        <id>O75586-3</id>
        <name>3</name>
        <sequence type="described" ref="VSP_054590"/>
    </isoform>
</comment>
<comment type="similarity">
    <text evidence="12">Belongs to the Mediator complex subunit 6 family.</text>
</comment>
<organism>
    <name type="scientific">Homo sapiens</name>
    <name type="common">Human</name>
    <dbReference type="NCBI Taxonomy" id="9606"/>
    <lineage>
        <taxon>Eukaryota</taxon>
        <taxon>Metazoa</taxon>
        <taxon>Chordata</taxon>
        <taxon>Craniata</taxon>
        <taxon>Vertebrata</taxon>
        <taxon>Euteleostomi</taxon>
        <taxon>Mammalia</taxon>
        <taxon>Eutheria</taxon>
        <taxon>Euarchontoglires</taxon>
        <taxon>Primates</taxon>
        <taxon>Haplorrhini</taxon>
        <taxon>Catarrhini</taxon>
        <taxon>Hominidae</taxon>
        <taxon>Homo</taxon>
    </lineage>
</organism>